<gene>
    <name evidence="1" type="primary">dapB</name>
    <name type="ordered locus">MM_1202</name>
</gene>
<proteinExistence type="inferred from homology"/>
<dbReference type="EC" id="1.17.1.8" evidence="1"/>
<dbReference type="EMBL" id="AE008384">
    <property type="protein sequence ID" value="AAM30898.1"/>
    <property type="molecule type" value="Genomic_DNA"/>
</dbReference>
<dbReference type="RefSeq" id="WP_011033151.1">
    <property type="nucleotide sequence ID" value="NC_003901.1"/>
</dbReference>
<dbReference type="SMR" id="Q8PXL6"/>
<dbReference type="GeneID" id="82160236"/>
<dbReference type="KEGG" id="mma:MM_1202"/>
<dbReference type="PATRIC" id="fig|192952.21.peg.1406"/>
<dbReference type="eggNOG" id="arCOG04393">
    <property type="taxonomic scope" value="Archaea"/>
</dbReference>
<dbReference type="HOGENOM" id="CLU_047479_2_1_2"/>
<dbReference type="UniPathway" id="UPA00034">
    <property type="reaction ID" value="UER00018"/>
</dbReference>
<dbReference type="Proteomes" id="UP000000595">
    <property type="component" value="Chromosome"/>
</dbReference>
<dbReference type="GO" id="GO:0005737">
    <property type="term" value="C:cytoplasm"/>
    <property type="evidence" value="ECO:0007669"/>
    <property type="project" value="UniProtKB-SubCell"/>
</dbReference>
<dbReference type="GO" id="GO:0008839">
    <property type="term" value="F:4-hydroxy-tetrahydrodipicolinate reductase"/>
    <property type="evidence" value="ECO:0007669"/>
    <property type="project" value="UniProtKB-EC"/>
</dbReference>
<dbReference type="GO" id="GO:0051287">
    <property type="term" value="F:NAD binding"/>
    <property type="evidence" value="ECO:0007669"/>
    <property type="project" value="UniProtKB-UniRule"/>
</dbReference>
<dbReference type="GO" id="GO:0050661">
    <property type="term" value="F:NADP binding"/>
    <property type="evidence" value="ECO:0007669"/>
    <property type="project" value="UniProtKB-UniRule"/>
</dbReference>
<dbReference type="GO" id="GO:0016726">
    <property type="term" value="F:oxidoreductase activity, acting on CH or CH2 groups, NAD or NADP as acceptor"/>
    <property type="evidence" value="ECO:0007669"/>
    <property type="project" value="UniProtKB-UniRule"/>
</dbReference>
<dbReference type="GO" id="GO:0019877">
    <property type="term" value="P:diaminopimelate biosynthetic process"/>
    <property type="evidence" value="ECO:0007669"/>
    <property type="project" value="UniProtKB-UniRule"/>
</dbReference>
<dbReference type="GO" id="GO:0009089">
    <property type="term" value="P:lysine biosynthetic process via diaminopimelate"/>
    <property type="evidence" value="ECO:0007669"/>
    <property type="project" value="UniProtKB-UniRule"/>
</dbReference>
<dbReference type="CDD" id="cd02274">
    <property type="entry name" value="DHDPR_N"/>
    <property type="match status" value="1"/>
</dbReference>
<dbReference type="FunFam" id="3.30.360.10:FF:000004">
    <property type="entry name" value="4-hydroxy-tetrahydrodipicolinate reductase"/>
    <property type="match status" value="1"/>
</dbReference>
<dbReference type="Gene3D" id="3.30.360.10">
    <property type="entry name" value="Dihydrodipicolinate Reductase, domain 2"/>
    <property type="match status" value="1"/>
</dbReference>
<dbReference type="Gene3D" id="3.40.50.720">
    <property type="entry name" value="NAD(P)-binding Rossmann-like Domain"/>
    <property type="match status" value="1"/>
</dbReference>
<dbReference type="HAMAP" id="MF_00102">
    <property type="entry name" value="DapB"/>
    <property type="match status" value="1"/>
</dbReference>
<dbReference type="InterPro" id="IPR022663">
    <property type="entry name" value="DapB_C"/>
</dbReference>
<dbReference type="InterPro" id="IPR000846">
    <property type="entry name" value="DapB_N"/>
</dbReference>
<dbReference type="InterPro" id="IPR022664">
    <property type="entry name" value="DapB_N_CS"/>
</dbReference>
<dbReference type="InterPro" id="IPR023940">
    <property type="entry name" value="DHDPR_bac"/>
</dbReference>
<dbReference type="InterPro" id="IPR036291">
    <property type="entry name" value="NAD(P)-bd_dom_sf"/>
</dbReference>
<dbReference type="NCBIfam" id="TIGR00036">
    <property type="entry name" value="dapB"/>
    <property type="match status" value="1"/>
</dbReference>
<dbReference type="PANTHER" id="PTHR20836:SF0">
    <property type="entry name" value="4-HYDROXY-TETRAHYDRODIPICOLINATE REDUCTASE 1, CHLOROPLASTIC-RELATED"/>
    <property type="match status" value="1"/>
</dbReference>
<dbReference type="PANTHER" id="PTHR20836">
    <property type="entry name" value="DIHYDRODIPICOLINATE REDUCTASE"/>
    <property type="match status" value="1"/>
</dbReference>
<dbReference type="Pfam" id="PF05173">
    <property type="entry name" value="DapB_C"/>
    <property type="match status" value="1"/>
</dbReference>
<dbReference type="Pfam" id="PF01113">
    <property type="entry name" value="DapB_N"/>
    <property type="match status" value="1"/>
</dbReference>
<dbReference type="PIRSF" id="PIRSF000161">
    <property type="entry name" value="DHPR"/>
    <property type="match status" value="1"/>
</dbReference>
<dbReference type="SUPFAM" id="SSF55347">
    <property type="entry name" value="Glyceraldehyde-3-phosphate dehydrogenase-like, C-terminal domain"/>
    <property type="match status" value="1"/>
</dbReference>
<dbReference type="SUPFAM" id="SSF51735">
    <property type="entry name" value="NAD(P)-binding Rossmann-fold domains"/>
    <property type="match status" value="1"/>
</dbReference>
<dbReference type="PROSITE" id="PS01298">
    <property type="entry name" value="DAPB"/>
    <property type="match status" value="1"/>
</dbReference>
<accession>Q8PXL6</accession>
<sequence>MINAAVLGACGRMGSLIIENITCSTDMQLVAAFDIGNIGKDAGEFAHVGNLGIQISDVKDLETVLKKTQADVLIDFTAAGATIVNAPIAAGCGVNLIIGTTGITSEQRAVIEEAIRKNQVRAVISPNYSVGVNVFFKIVREAAKYLADYDIEIIEAHHNQKKDAPSGTALRAADVISEALGGKEYVYGREGIAPRGKEIGIHAVRGGDITGDHTVLFVGNSERVEIHHMAHSRQIFAKGAVRAAEWICGQEPGIYSMDDVLGL</sequence>
<organism>
    <name type="scientific">Methanosarcina mazei (strain ATCC BAA-159 / DSM 3647 / Goe1 / Go1 / JCM 11833 / OCM 88)</name>
    <name type="common">Methanosarcina frisia</name>
    <dbReference type="NCBI Taxonomy" id="192952"/>
    <lineage>
        <taxon>Archaea</taxon>
        <taxon>Methanobacteriati</taxon>
        <taxon>Methanobacteriota</taxon>
        <taxon>Stenosarchaea group</taxon>
        <taxon>Methanomicrobia</taxon>
        <taxon>Methanosarcinales</taxon>
        <taxon>Methanosarcinaceae</taxon>
        <taxon>Methanosarcina</taxon>
    </lineage>
</organism>
<evidence type="ECO:0000255" key="1">
    <source>
        <dbReference type="HAMAP-Rule" id="MF_00102"/>
    </source>
</evidence>
<evidence type="ECO:0000305" key="2"/>
<comment type="function">
    <text evidence="1">Catalyzes the conversion of 4-hydroxy-tetrahydrodipicolinate (HTPA) to tetrahydrodipicolinate.</text>
</comment>
<comment type="catalytic activity">
    <reaction evidence="1">
        <text>(S)-2,3,4,5-tetrahydrodipicolinate + NAD(+) + H2O = (2S,4S)-4-hydroxy-2,3,4,5-tetrahydrodipicolinate + NADH + H(+)</text>
        <dbReference type="Rhea" id="RHEA:35323"/>
        <dbReference type="ChEBI" id="CHEBI:15377"/>
        <dbReference type="ChEBI" id="CHEBI:15378"/>
        <dbReference type="ChEBI" id="CHEBI:16845"/>
        <dbReference type="ChEBI" id="CHEBI:57540"/>
        <dbReference type="ChEBI" id="CHEBI:57945"/>
        <dbReference type="ChEBI" id="CHEBI:67139"/>
        <dbReference type="EC" id="1.17.1.8"/>
    </reaction>
</comment>
<comment type="catalytic activity">
    <reaction evidence="1">
        <text>(S)-2,3,4,5-tetrahydrodipicolinate + NADP(+) + H2O = (2S,4S)-4-hydroxy-2,3,4,5-tetrahydrodipicolinate + NADPH + H(+)</text>
        <dbReference type="Rhea" id="RHEA:35331"/>
        <dbReference type="ChEBI" id="CHEBI:15377"/>
        <dbReference type="ChEBI" id="CHEBI:15378"/>
        <dbReference type="ChEBI" id="CHEBI:16845"/>
        <dbReference type="ChEBI" id="CHEBI:57783"/>
        <dbReference type="ChEBI" id="CHEBI:58349"/>
        <dbReference type="ChEBI" id="CHEBI:67139"/>
        <dbReference type="EC" id="1.17.1.8"/>
    </reaction>
</comment>
<comment type="pathway">
    <text evidence="1">Amino-acid biosynthesis; L-lysine biosynthesis via DAP pathway; (S)-tetrahydrodipicolinate from L-aspartate: step 4/4.</text>
</comment>
<comment type="subcellular location">
    <subcellularLocation>
        <location evidence="1">Cytoplasm</location>
    </subcellularLocation>
</comment>
<comment type="similarity">
    <text evidence="1">Belongs to the DapB family.</text>
</comment>
<comment type="caution">
    <text evidence="2">Was originally thought to be a dihydrodipicolinate reductase (DHDPR), catalyzing the conversion of dihydrodipicolinate to tetrahydrodipicolinate. However, it was shown in E.coli that the substrate of the enzymatic reaction is not dihydrodipicolinate (DHDP) but in fact (2S,4S)-4-hydroxy-2,3,4,5-tetrahydrodipicolinic acid (HTPA), the product released by the DapA-catalyzed reaction.</text>
</comment>
<feature type="chain" id="PRO_0000141520" description="4-hydroxy-tetrahydrodipicolinate reductase">
    <location>
        <begin position="1"/>
        <end position="263"/>
    </location>
</feature>
<feature type="active site" description="Proton donor/acceptor" evidence="1">
    <location>
        <position position="157"/>
    </location>
</feature>
<feature type="active site" description="Proton donor" evidence="1">
    <location>
        <position position="161"/>
    </location>
</feature>
<feature type="binding site" evidence="1">
    <location>
        <begin position="8"/>
        <end position="13"/>
    </location>
    <ligand>
        <name>NAD(+)</name>
        <dbReference type="ChEBI" id="CHEBI:57540"/>
    </ligand>
</feature>
<feature type="binding site" evidence="1">
    <location>
        <position position="34"/>
    </location>
    <ligand>
        <name>NAD(+)</name>
        <dbReference type="ChEBI" id="CHEBI:57540"/>
    </ligand>
</feature>
<feature type="binding site" evidence="1">
    <location>
        <begin position="99"/>
        <end position="101"/>
    </location>
    <ligand>
        <name>NAD(+)</name>
        <dbReference type="ChEBI" id="CHEBI:57540"/>
    </ligand>
</feature>
<feature type="binding site" evidence="1">
    <location>
        <begin position="125"/>
        <end position="128"/>
    </location>
    <ligand>
        <name>NAD(+)</name>
        <dbReference type="ChEBI" id="CHEBI:57540"/>
    </ligand>
</feature>
<feature type="binding site" evidence="1">
    <location>
        <position position="158"/>
    </location>
    <ligand>
        <name>(S)-2,3,4,5-tetrahydrodipicolinate</name>
        <dbReference type="ChEBI" id="CHEBI:16845"/>
    </ligand>
</feature>
<feature type="binding site" evidence="1">
    <location>
        <begin position="167"/>
        <end position="168"/>
    </location>
    <ligand>
        <name>(S)-2,3,4,5-tetrahydrodipicolinate</name>
        <dbReference type="ChEBI" id="CHEBI:16845"/>
    </ligand>
</feature>
<keyword id="KW-0028">Amino-acid biosynthesis</keyword>
<keyword id="KW-0963">Cytoplasm</keyword>
<keyword id="KW-0220">Diaminopimelate biosynthesis</keyword>
<keyword id="KW-0457">Lysine biosynthesis</keyword>
<keyword id="KW-0520">NAD</keyword>
<keyword id="KW-0521">NADP</keyword>
<keyword id="KW-0560">Oxidoreductase</keyword>
<reference key="1">
    <citation type="journal article" date="2002" name="J. Mol. Microbiol. Biotechnol.">
        <title>The genome of Methanosarcina mazei: evidence for lateral gene transfer between Bacteria and Archaea.</title>
        <authorList>
            <person name="Deppenmeier U."/>
            <person name="Johann A."/>
            <person name="Hartsch T."/>
            <person name="Merkl R."/>
            <person name="Schmitz R.A."/>
            <person name="Martinez-Arias R."/>
            <person name="Henne A."/>
            <person name="Wiezer A."/>
            <person name="Baeumer S."/>
            <person name="Jacobi C."/>
            <person name="Brueggemann H."/>
            <person name="Lienard T."/>
            <person name="Christmann A."/>
            <person name="Boemecke M."/>
            <person name="Steckel S."/>
            <person name="Bhattacharyya A."/>
            <person name="Lykidis A."/>
            <person name="Overbeek R."/>
            <person name="Klenk H.-P."/>
            <person name="Gunsalus R.P."/>
            <person name="Fritz H.-J."/>
            <person name="Gottschalk G."/>
        </authorList>
    </citation>
    <scope>NUCLEOTIDE SEQUENCE [LARGE SCALE GENOMIC DNA]</scope>
    <source>
        <strain>ATCC BAA-159 / DSM 3647 / Goe1 / Go1 / JCM 11833 / OCM 88</strain>
    </source>
</reference>
<name>DAPB_METMA</name>
<protein>
    <recommendedName>
        <fullName evidence="1">4-hydroxy-tetrahydrodipicolinate reductase</fullName>
        <shortName evidence="1">HTPA reductase</shortName>
        <ecNumber evidence="1">1.17.1.8</ecNumber>
    </recommendedName>
</protein>